<comment type="function">
    <text evidence="1">Catalyzes the attachment of proline to tRNA(Pro) in a two-step reaction: proline is first activated by ATP to form Pro-AMP and then transferred to the acceptor end of tRNA(Pro). As ProRS can inadvertently accommodate and process non-cognate amino acids such as alanine and cysteine, to avoid such errors it has two additional distinct editing activities against alanine. One activity is designated as 'pretransfer' editing and involves the tRNA(Pro)-independent hydrolysis of activated Ala-AMP. The other activity is designated 'posttransfer' editing and involves deacylation of mischarged Ala-tRNA(Pro). The misacylated Cys-tRNA(Pro) is not edited by ProRS.</text>
</comment>
<comment type="catalytic activity">
    <reaction evidence="1">
        <text>tRNA(Pro) + L-proline + ATP = L-prolyl-tRNA(Pro) + AMP + diphosphate</text>
        <dbReference type="Rhea" id="RHEA:14305"/>
        <dbReference type="Rhea" id="RHEA-COMP:9700"/>
        <dbReference type="Rhea" id="RHEA-COMP:9702"/>
        <dbReference type="ChEBI" id="CHEBI:30616"/>
        <dbReference type="ChEBI" id="CHEBI:33019"/>
        <dbReference type="ChEBI" id="CHEBI:60039"/>
        <dbReference type="ChEBI" id="CHEBI:78442"/>
        <dbReference type="ChEBI" id="CHEBI:78532"/>
        <dbReference type="ChEBI" id="CHEBI:456215"/>
        <dbReference type="EC" id="6.1.1.15"/>
    </reaction>
</comment>
<comment type="subunit">
    <text evidence="1">Homodimer.</text>
</comment>
<comment type="subcellular location">
    <subcellularLocation>
        <location evidence="1">Cytoplasm</location>
    </subcellularLocation>
</comment>
<comment type="domain">
    <text evidence="1">Consists of three domains: the N-terminal catalytic domain, the editing domain and the C-terminal anticodon-binding domain.</text>
</comment>
<comment type="similarity">
    <text evidence="1">Belongs to the class-II aminoacyl-tRNA synthetase family. ProS type 1 subfamily.</text>
</comment>
<feature type="chain" id="PRO_0000248688" description="Proline--tRNA ligase">
    <location>
        <begin position="1"/>
        <end position="572"/>
    </location>
</feature>
<feature type="helix" evidence="2">
    <location>
        <begin position="3"/>
        <end position="5"/>
    </location>
</feature>
<feature type="helix" evidence="2">
    <location>
        <begin position="21"/>
        <end position="28"/>
    </location>
</feature>
<feature type="strand" evidence="2">
    <location>
        <begin position="31"/>
        <end position="36"/>
    </location>
</feature>
<feature type="strand" evidence="2">
    <location>
        <begin position="39"/>
        <end position="42"/>
    </location>
</feature>
<feature type="helix" evidence="2">
    <location>
        <begin position="44"/>
        <end position="62"/>
    </location>
</feature>
<feature type="turn" evidence="2">
    <location>
        <begin position="63"/>
        <end position="65"/>
    </location>
</feature>
<feature type="strand" evidence="2">
    <location>
        <begin position="73"/>
        <end position="76"/>
    </location>
</feature>
<feature type="helix" evidence="2">
    <location>
        <begin position="78"/>
        <end position="83"/>
    </location>
</feature>
<feature type="helix" evidence="2">
    <location>
        <begin position="85"/>
        <end position="88"/>
    </location>
</feature>
<feature type="strand" evidence="2">
    <location>
        <begin position="95"/>
        <end position="97"/>
    </location>
</feature>
<feature type="strand" evidence="2">
    <location>
        <begin position="103"/>
        <end position="106"/>
    </location>
</feature>
<feature type="helix" evidence="2">
    <location>
        <begin position="111"/>
        <end position="121"/>
    </location>
</feature>
<feature type="helix" evidence="2">
    <location>
        <begin position="125"/>
        <end position="127"/>
    </location>
</feature>
<feature type="strand" evidence="2">
    <location>
        <begin position="130"/>
        <end position="139"/>
    </location>
</feature>
<feature type="helix" evidence="2">
    <location>
        <begin position="148"/>
        <end position="150"/>
    </location>
</feature>
<feature type="strand" evidence="2">
    <location>
        <begin position="153"/>
        <end position="166"/>
    </location>
</feature>
<feature type="helix" evidence="2">
    <location>
        <begin position="167"/>
        <end position="187"/>
    </location>
</feature>
<feature type="strand" evidence="2">
    <location>
        <begin position="192"/>
        <end position="196"/>
    </location>
</feature>
<feature type="helix" evidence="2">
    <location>
        <begin position="199"/>
        <end position="202"/>
    </location>
</feature>
<feature type="strand" evidence="2">
    <location>
        <begin position="205"/>
        <end position="213"/>
    </location>
</feature>
<feature type="strand" evidence="2">
    <location>
        <begin position="218"/>
        <end position="228"/>
    </location>
</feature>
<feature type="strand" evidence="2">
    <location>
        <begin position="230"/>
        <end position="232"/>
    </location>
</feature>
<feature type="turn" evidence="2">
    <location>
        <begin position="233"/>
        <end position="235"/>
    </location>
</feature>
<feature type="strand" evidence="2">
    <location>
        <begin position="253"/>
        <end position="256"/>
    </location>
</feature>
<feature type="helix" evidence="2">
    <location>
        <begin position="263"/>
        <end position="270"/>
    </location>
</feature>
<feature type="helix" evidence="2">
    <location>
        <begin position="274"/>
        <end position="276"/>
    </location>
</feature>
<feature type="strand" evidence="2">
    <location>
        <begin position="277"/>
        <end position="285"/>
    </location>
</feature>
<feature type="strand" evidence="2">
    <location>
        <begin position="288"/>
        <end position="295"/>
    </location>
</feature>
<feature type="helix" evidence="2">
    <location>
        <begin position="302"/>
        <end position="309"/>
    </location>
</feature>
<feature type="strand" evidence="2">
    <location>
        <begin position="314"/>
        <end position="316"/>
    </location>
</feature>
<feature type="helix" evidence="2">
    <location>
        <begin position="319"/>
        <end position="326"/>
    </location>
</feature>
<feature type="helix" evidence="3">
    <location>
        <begin position="330"/>
        <end position="332"/>
    </location>
</feature>
<feature type="strand" evidence="3">
    <location>
        <begin position="335"/>
        <end position="337"/>
    </location>
</feature>
<feature type="strand" evidence="2">
    <location>
        <begin position="343"/>
        <end position="347"/>
    </location>
</feature>
<feature type="turn" evidence="2">
    <location>
        <begin position="348"/>
        <end position="352"/>
    </location>
</feature>
<feature type="strand" evidence="2">
    <location>
        <begin position="355"/>
        <end position="359"/>
    </location>
</feature>
<feature type="strand" evidence="2">
    <location>
        <begin position="365"/>
        <end position="370"/>
    </location>
</feature>
<feature type="turn" evidence="2">
    <location>
        <begin position="372"/>
        <end position="374"/>
    </location>
</feature>
<feature type="strand" evidence="2">
    <location>
        <begin position="379"/>
        <end position="382"/>
    </location>
</feature>
<feature type="strand" evidence="2">
    <location>
        <begin position="396"/>
        <end position="415"/>
    </location>
</feature>
<feature type="helix" evidence="2">
    <location>
        <begin position="417"/>
        <end position="422"/>
    </location>
</feature>
<feature type="strand" evidence="2">
    <location>
        <begin position="425"/>
        <end position="427"/>
    </location>
</feature>
<feature type="strand" evidence="2">
    <location>
        <begin position="433"/>
        <end position="435"/>
    </location>
</feature>
<feature type="strand" evidence="2">
    <location>
        <begin position="437"/>
        <end position="444"/>
    </location>
</feature>
<feature type="helix" evidence="2">
    <location>
        <begin position="445"/>
        <end position="456"/>
    </location>
</feature>
<feature type="turn" evidence="2">
    <location>
        <begin position="466"/>
        <end position="468"/>
    </location>
</feature>
<feature type="strand" evidence="2">
    <location>
        <begin position="472"/>
        <end position="478"/>
    </location>
</feature>
<feature type="helix" evidence="2">
    <location>
        <begin position="483"/>
        <end position="498"/>
    </location>
</feature>
<feature type="strand" evidence="2">
    <location>
        <begin position="503"/>
        <end position="506"/>
    </location>
</feature>
<feature type="helix" evidence="2">
    <location>
        <begin position="512"/>
        <end position="522"/>
    </location>
</feature>
<feature type="strand" evidence="2">
    <location>
        <begin position="525"/>
        <end position="530"/>
    </location>
</feature>
<feature type="helix" evidence="2">
    <location>
        <begin position="532"/>
        <end position="536"/>
    </location>
</feature>
<feature type="strand" evidence="2">
    <location>
        <begin position="538"/>
        <end position="543"/>
    </location>
</feature>
<feature type="turn" evidence="2">
    <location>
        <begin position="544"/>
        <end position="546"/>
    </location>
</feature>
<feature type="strand" evidence="2">
    <location>
        <begin position="549"/>
        <end position="553"/>
    </location>
</feature>
<feature type="helix" evidence="2">
    <location>
        <begin position="554"/>
        <end position="564"/>
    </location>
</feature>
<protein>
    <recommendedName>
        <fullName evidence="1">Proline--tRNA ligase</fullName>
        <ecNumber evidence="1">6.1.1.15</ecNumber>
    </recommendedName>
    <alternativeName>
        <fullName evidence="1">Prolyl-tRNA synthetase</fullName>
        <shortName evidence="1">ProRS</shortName>
    </alternativeName>
</protein>
<sequence>MKQSKMLIPTLREVPNDAEVLSHQILLRAGYIRQVAAGIYSYLPLANRVLEKLKTIMREEFEKIDAVEMLMPALLPAELWKESGRYETYGPNLYRLKDRNDRDYILGPTHEETFTELIRDEINSYKRLPLNLYQIQTKYRDEKRSRSGLLRGREFIMKDGYSFHADEASLDQSYRDYEKAYSRIFERCGLEFRAIIGDGGAMGGKDSKEFMAISEIGEDTICYSTESDYAANLEMATSLYTPKKSHETQLDLEKIATPEVGTIAEVANFFEVEPQRIIKSVLFIADEEPVMVLVRGDHDVNDVKLKNFLGADFLDEATEEDARRVLGAGFGSIGPVNVSEDVKIYADLAVQDLANAIVGANEDGYHLTNVNPDRDFQPISYEDLRFVQEGDPSPDGNGVLAFTKGIEIGHIFKLGTRYSDAMGATVLDENGREKSVIMGCYGIGVSRLLSAIVEQNADERGINWPTGIAPFDLHVVQMNVKDEYQTKLSQEVEAMMTEAGYEVLVDDRNERAGVKFADADLIGCPIRITVGKKAVDGVVEVKIKRTGEMLEVRKEELESTLSILMNTTSEVE</sequence>
<proteinExistence type="evidence at protein level"/>
<gene>
    <name evidence="1" type="primary">proS</name>
    <name type="ordered locus">EF_2379</name>
</gene>
<accession>Q831W7</accession>
<dbReference type="EC" id="6.1.1.15" evidence="1"/>
<dbReference type="EMBL" id="AE016830">
    <property type="protein sequence ID" value="AAO82100.1"/>
    <property type="molecule type" value="Genomic_DNA"/>
</dbReference>
<dbReference type="RefSeq" id="NP_816030.1">
    <property type="nucleotide sequence ID" value="NC_004668.1"/>
</dbReference>
<dbReference type="RefSeq" id="WP_002382780.1">
    <property type="nucleotide sequence ID" value="NZ_KE136528.1"/>
</dbReference>
<dbReference type="PDB" id="2J3L">
    <property type="method" value="X-ray"/>
    <property type="resolution" value="2.30 A"/>
    <property type="chains" value="A/B=1-572"/>
</dbReference>
<dbReference type="PDB" id="2J3M">
    <property type="method" value="X-ray"/>
    <property type="resolution" value="2.30 A"/>
    <property type="chains" value="A/B=1-572"/>
</dbReference>
<dbReference type="PDBsum" id="2J3L"/>
<dbReference type="PDBsum" id="2J3M"/>
<dbReference type="SMR" id="Q831W7"/>
<dbReference type="DIP" id="DIP-29057N"/>
<dbReference type="STRING" id="226185.EF_2379"/>
<dbReference type="EnsemblBacteria" id="AAO82100">
    <property type="protein sequence ID" value="AAO82100"/>
    <property type="gene ID" value="EF_2379"/>
</dbReference>
<dbReference type="KEGG" id="efa:EF2379"/>
<dbReference type="PATRIC" id="fig|226185.45.peg.1159"/>
<dbReference type="eggNOG" id="COG0442">
    <property type="taxonomic scope" value="Bacteria"/>
</dbReference>
<dbReference type="HOGENOM" id="CLU_016739_0_0_9"/>
<dbReference type="BRENDA" id="6.1.1.15">
    <property type="organism ID" value="2095"/>
</dbReference>
<dbReference type="EvolutionaryTrace" id="Q831W7"/>
<dbReference type="Proteomes" id="UP000001415">
    <property type="component" value="Chromosome"/>
</dbReference>
<dbReference type="GO" id="GO:0005829">
    <property type="term" value="C:cytosol"/>
    <property type="evidence" value="ECO:0007669"/>
    <property type="project" value="TreeGrafter"/>
</dbReference>
<dbReference type="GO" id="GO:0002161">
    <property type="term" value="F:aminoacyl-tRNA deacylase activity"/>
    <property type="evidence" value="ECO:0007669"/>
    <property type="project" value="InterPro"/>
</dbReference>
<dbReference type="GO" id="GO:0005524">
    <property type="term" value="F:ATP binding"/>
    <property type="evidence" value="ECO:0007669"/>
    <property type="project" value="UniProtKB-UniRule"/>
</dbReference>
<dbReference type="GO" id="GO:0140096">
    <property type="term" value="F:catalytic activity, acting on a protein"/>
    <property type="evidence" value="ECO:0007669"/>
    <property type="project" value="UniProtKB-ARBA"/>
</dbReference>
<dbReference type="GO" id="GO:0004827">
    <property type="term" value="F:proline-tRNA ligase activity"/>
    <property type="evidence" value="ECO:0007669"/>
    <property type="project" value="UniProtKB-UniRule"/>
</dbReference>
<dbReference type="GO" id="GO:0016740">
    <property type="term" value="F:transferase activity"/>
    <property type="evidence" value="ECO:0007669"/>
    <property type="project" value="UniProtKB-ARBA"/>
</dbReference>
<dbReference type="GO" id="GO:0006433">
    <property type="term" value="P:prolyl-tRNA aminoacylation"/>
    <property type="evidence" value="ECO:0007669"/>
    <property type="project" value="UniProtKB-UniRule"/>
</dbReference>
<dbReference type="CDD" id="cd04334">
    <property type="entry name" value="ProRS-INS"/>
    <property type="match status" value="1"/>
</dbReference>
<dbReference type="CDD" id="cd00861">
    <property type="entry name" value="ProRS_anticodon_short"/>
    <property type="match status" value="1"/>
</dbReference>
<dbReference type="CDD" id="cd00779">
    <property type="entry name" value="ProRS_core_prok"/>
    <property type="match status" value="1"/>
</dbReference>
<dbReference type="FunFam" id="3.40.50.800:FF:000011">
    <property type="entry name" value="Proline--tRNA ligase"/>
    <property type="match status" value="1"/>
</dbReference>
<dbReference type="Gene3D" id="3.40.50.800">
    <property type="entry name" value="Anticodon-binding domain"/>
    <property type="match status" value="1"/>
</dbReference>
<dbReference type="Gene3D" id="3.30.930.10">
    <property type="entry name" value="Bira Bifunctional Protein, Domain 2"/>
    <property type="match status" value="2"/>
</dbReference>
<dbReference type="Gene3D" id="3.90.960.10">
    <property type="entry name" value="YbaK/aminoacyl-tRNA synthetase-associated domain"/>
    <property type="match status" value="1"/>
</dbReference>
<dbReference type="HAMAP" id="MF_01569">
    <property type="entry name" value="Pro_tRNA_synth_type1"/>
    <property type="match status" value="1"/>
</dbReference>
<dbReference type="InterPro" id="IPR002314">
    <property type="entry name" value="aa-tRNA-synt_IIb"/>
</dbReference>
<dbReference type="InterPro" id="IPR006195">
    <property type="entry name" value="aa-tRNA-synth_II"/>
</dbReference>
<dbReference type="InterPro" id="IPR045864">
    <property type="entry name" value="aa-tRNA-synth_II/BPL/LPL"/>
</dbReference>
<dbReference type="InterPro" id="IPR004154">
    <property type="entry name" value="Anticodon-bd"/>
</dbReference>
<dbReference type="InterPro" id="IPR036621">
    <property type="entry name" value="Anticodon-bd_dom_sf"/>
</dbReference>
<dbReference type="InterPro" id="IPR002316">
    <property type="entry name" value="Pro-tRNA-ligase_IIa"/>
</dbReference>
<dbReference type="InterPro" id="IPR004500">
    <property type="entry name" value="Pro-tRNA-synth_IIa_bac-type"/>
</dbReference>
<dbReference type="InterPro" id="IPR023717">
    <property type="entry name" value="Pro-tRNA-Synthase_IIa_type1"/>
</dbReference>
<dbReference type="InterPro" id="IPR050062">
    <property type="entry name" value="Pro-tRNA_synthetase"/>
</dbReference>
<dbReference type="InterPro" id="IPR044140">
    <property type="entry name" value="ProRS_anticodon_short"/>
</dbReference>
<dbReference type="InterPro" id="IPR033730">
    <property type="entry name" value="ProRS_core_prok"/>
</dbReference>
<dbReference type="InterPro" id="IPR036754">
    <property type="entry name" value="YbaK/aa-tRNA-synt-asso_dom_sf"/>
</dbReference>
<dbReference type="InterPro" id="IPR007214">
    <property type="entry name" value="YbaK/aa-tRNA-synth-assoc-dom"/>
</dbReference>
<dbReference type="NCBIfam" id="NF006625">
    <property type="entry name" value="PRK09194.1"/>
    <property type="match status" value="1"/>
</dbReference>
<dbReference type="NCBIfam" id="TIGR00409">
    <property type="entry name" value="proS_fam_II"/>
    <property type="match status" value="1"/>
</dbReference>
<dbReference type="PANTHER" id="PTHR42753">
    <property type="entry name" value="MITOCHONDRIAL RIBOSOME PROTEIN L39/PROLYL-TRNA LIGASE FAMILY MEMBER"/>
    <property type="match status" value="1"/>
</dbReference>
<dbReference type="PANTHER" id="PTHR42753:SF2">
    <property type="entry name" value="PROLINE--TRNA LIGASE"/>
    <property type="match status" value="1"/>
</dbReference>
<dbReference type="Pfam" id="PF03129">
    <property type="entry name" value="HGTP_anticodon"/>
    <property type="match status" value="1"/>
</dbReference>
<dbReference type="Pfam" id="PF00587">
    <property type="entry name" value="tRNA-synt_2b"/>
    <property type="match status" value="1"/>
</dbReference>
<dbReference type="Pfam" id="PF04073">
    <property type="entry name" value="tRNA_edit"/>
    <property type="match status" value="1"/>
</dbReference>
<dbReference type="PRINTS" id="PR01046">
    <property type="entry name" value="TRNASYNTHPRO"/>
</dbReference>
<dbReference type="SUPFAM" id="SSF52954">
    <property type="entry name" value="Class II aaRS ABD-related"/>
    <property type="match status" value="1"/>
</dbReference>
<dbReference type="SUPFAM" id="SSF55681">
    <property type="entry name" value="Class II aaRS and biotin synthetases"/>
    <property type="match status" value="1"/>
</dbReference>
<dbReference type="SUPFAM" id="SSF55826">
    <property type="entry name" value="YbaK/ProRS associated domain"/>
    <property type="match status" value="1"/>
</dbReference>
<dbReference type="PROSITE" id="PS50862">
    <property type="entry name" value="AA_TRNA_LIGASE_II"/>
    <property type="match status" value="1"/>
</dbReference>
<reference key="1">
    <citation type="journal article" date="2003" name="Science">
        <title>Role of mobile DNA in the evolution of vancomycin-resistant Enterococcus faecalis.</title>
        <authorList>
            <person name="Paulsen I.T."/>
            <person name="Banerjei L."/>
            <person name="Myers G.S.A."/>
            <person name="Nelson K.E."/>
            <person name="Seshadri R."/>
            <person name="Read T.D."/>
            <person name="Fouts D.E."/>
            <person name="Eisen J.A."/>
            <person name="Gill S.R."/>
            <person name="Heidelberg J.F."/>
            <person name="Tettelin H."/>
            <person name="Dodson R.J."/>
            <person name="Umayam L.A."/>
            <person name="Brinkac L.M."/>
            <person name="Beanan M.J."/>
            <person name="Daugherty S.C."/>
            <person name="DeBoy R.T."/>
            <person name="Durkin S.A."/>
            <person name="Kolonay J.F."/>
            <person name="Madupu R."/>
            <person name="Nelson W.C."/>
            <person name="Vamathevan J.J."/>
            <person name="Tran B."/>
            <person name="Upton J."/>
            <person name="Hansen T."/>
            <person name="Shetty J."/>
            <person name="Khouri H.M."/>
            <person name="Utterback T.R."/>
            <person name="Radune D."/>
            <person name="Ketchum K.A."/>
            <person name="Dougherty B.A."/>
            <person name="Fraser C.M."/>
        </authorList>
    </citation>
    <scope>NUCLEOTIDE SEQUENCE [LARGE SCALE GENOMIC DNA]</scope>
    <source>
        <strain>ATCC 700802 / V583</strain>
    </source>
</reference>
<keyword id="KW-0002">3D-structure</keyword>
<keyword id="KW-0030">Aminoacyl-tRNA synthetase</keyword>
<keyword id="KW-0067">ATP-binding</keyword>
<keyword id="KW-0963">Cytoplasm</keyword>
<keyword id="KW-0436">Ligase</keyword>
<keyword id="KW-0547">Nucleotide-binding</keyword>
<keyword id="KW-0648">Protein biosynthesis</keyword>
<keyword id="KW-1185">Reference proteome</keyword>
<organism>
    <name type="scientific">Enterococcus faecalis (strain ATCC 700802 / V583)</name>
    <dbReference type="NCBI Taxonomy" id="226185"/>
    <lineage>
        <taxon>Bacteria</taxon>
        <taxon>Bacillati</taxon>
        <taxon>Bacillota</taxon>
        <taxon>Bacilli</taxon>
        <taxon>Lactobacillales</taxon>
        <taxon>Enterococcaceae</taxon>
        <taxon>Enterococcus</taxon>
    </lineage>
</organism>
<name>SYP_ENTFA</name>
<evidence type="ECO:0000255" key="1">
    <source>
        <dbReference type="HAMAP-Rule" id="MF_01569"/>
    </source>
</evidence>
<evidence type="ECO:0007829" key="2">
    <source>
        <dbReference type="PDB" id="2J3L"/>
    </source>
</evidence>
<evidence type="ECO:0007829" key="3">
    <source>
        <dbReference type="PDB" id="2J3M"/>
    </source>
</evidence>